<gene>
    <name evidence="1" type="primary">fbp</name>
    <name type="ordered locus">EcSMS35_4709</name>
</gene>
<feature type="chain" id="PRO_0000364547" description="Fructose-1,6-bisphosphatase class 1">
    <location>
        <begin position="1"/>
        <end position="332"/>
    </location>
</feature>
<feature type="binding site" evidence="1">
    <location>
        <position position="89"/>
    </location>
    <ligand>
        <name>Mg(2+)</name>
        <dbReference type="ChEBI" id="CHEBI:18420"/>
        <label>1</label>
    </ligand>
</feature>
<feature type="binding site" evidence="1">
    <location>
        <position position="110"/>
    </location>
    <ligand>
        <name>Mg(2+)</name>
        <dbReference type="ChEBI" id="CHEBI:18420"/>
        <label>1</label>
    </ligand>
</feature>
<feature type="binding site" evidence="1">
    <location>
        <position position="110"/>
    </location>
    <ligand>
        <name>Mg(2+)</name>
        <dbReference type="ChEBI" id="CHEBI:18420"/>
        <label>2</label>
    </ligand>
</feature>
<feature type="binding site" evidence="1">
    <location>
        <position position="112"/>
    </location>
    <ligand>
        <name>Mg(2+)</name>
        <dbReference type="ChEBI" id="CHEBI:18420"/>
        <label>1</label>
    </ligand>
</feature>
<feature type="binding site" evidence="1">
    <location>
        <begin position="113"/>
        <end position="116"/>
    </location>
    <ligand>
        <name>substrate</name>
    </ligand>
</feature>
<feature type="binding site" evidence="1">
    <location>
        <position position="113"/>
    </location>
    <ligand>
        <name>Mg(2+)</name>
        <dbReference type="ChEBI" id="CHEBI:18420"/>
        <label>2</label>
    </ligand>
</feature>
<feature type="binding site" evidence="1">
    <location>
        <position position="206"/>
    </location>
    <ligand>
        <name>substrate</name>
    </ligand>
</feature>
<feature type="binding site" evidence="1">
    <location>
        <position position="239"/>
    </location>
    <ligand>
        <name>substrate</name>
    </ligand>
</feature>
<feature type="binding site" evidence="1">
    <location>
        <begin position="257"/>
        <end position="259"/>
    </location>
    <ligand>
        <name>substrate</name>
    </ligand>
</feature>
<feature type="binding site" evidence="1">
    <location>
        <position position="269"/>
    </location>
    <ligand>
        <name>substrate</name>
    </ligand>
</feature>
<feature type="binding site" evidence="1">
    <location>
        <position position="275"/>
    </location>
    <ligand>
        <name>Mg(2+)</name>
        <dbReference type="ChEBI" id="CHEBI:18420"/>
        <label>2</label>
    </ligand>
</feature>
<comment type="catalytic activity">
    <reaction evidence="1">
        <text>beta-D-fructose 1,6-bisphosphate + H2O = beta-D-fructose 6-phosphate + phosphate</text>
        <dbReference type="Rhea" id="RHEA:11064"/>
        <dbReference type="ChEBI" id="CHEBI:15377"/>
        <dbReference type="ChEBI" id="CHEBI:32966"/>
        <dbReference type="ChEBI" id="CHEBI:43474"/>
        <dbReference type="ChEBI" id="CHEBI:57634"/>
        <dbReference type="EC" id="3.1.3.11"/>
    </reaction>
</comment>
<comment type="cofactor">
    <cofactor evidence="1">
        <name>Mg(2+)</name>
        <dbReference type="ChEBI" id="CHEBI:18420"/>
    </cofactor>
    <text evidence="1">Binds 2 magnesium ions per subunit.</text>
</comment>
<comment type="pathway">
    <text evidence="1">Carbohydrate biosynthesis; gluconeogenesis.</text>
</comment>
<comment type="subunit">
    <text evidence="1">Homotetramer.</text>
</comment>
<comment type="subcellular location">
    <subcellularLocation>
        <location evidence="1">Cytoplasm</location>
    </subcellularLocation>
</comment>
<comment type="similarity">
    <text evidence="1">Belongs to the FBPase class 1 family.</text>
</comment>
<evidence type="ECO:0000255" key="1">
    <source>
        <dbReference type="HAMAP-Rule" id="MF_01855"/>
    </source>
</evidence>
<dbReference type="EC" id="3.1.3.11" evidence="1"/>
<dbReference type="EMBL" id="CP000970">
    <property type="protein sequence ID" value="ACB18167.1"/>
    <property type="molecule type" value="Genomic_DNA"/>
</dbReference>
<dbReference type="RefSeq" id="WP_000853753.1">
    <property type="nucleotide sequence ID" value="NC_010498.1"/>
</dbReference>
<dbReference type="SMR" id="B1LRB5"/>
<dbReference type="GeneID" id="86861371"/>
<dbReference type="KEGG" id="ecm:EcSMS35_4709"/>
<dbReference type="HOGENOM" id="CLU_039977_2_2_6"/>
<dbReference type="UniPathway" id="UPA00138"/>
<dbReference type="Proteomes" id="UP000007011">
    <property type="component" value="Chromosome"/>
</dbReference>
<dbReference type="GO" id="GO:0005829">
    <property type="term" value="C:cytosol"/>
    <property type="evidence" value="ECO:0007669"/>
    <property type="project" value="TreeGrafter"/>
</dbReference>
<dbReference type="GO" id="GO:0042132">
    <property type="term" value="F:fructose 1,6-bisphosphate 1-phosphatase activity"/>
    <property type="evidence" value="ECO:0007669"/>
    <property type="project" value="UniProtKB-UniRule"/>
</dbReference>
<dbReference type="GO" id="GO:0000287">
    <property type="term" value="F:magnesium ion binding"/>
    <property type="evidence" value="ECO:0007669"/>
    <property type="project" value="UniProtKB-UniRule"/>
</dbReference>
<dbReference type="GO" id="GO:0030388">
    <property type="term" value="P:fructose 1,6-bisphosphate metabolic process"/>
    <property type="evidence" value="ECO:0007669"/>
    <property type="project" value="TreeGrafter"/>
</dbReference>
<dbReference type="GO" id="GO:0006002">
    <property type="term" value="P:fructose 6-phosphate metabolic process"/>
    <property type="evidence" value="ECO:0007669"/>
    <property type="project" value="TreeGrafter"/>
</dbReference>
<dbReference type="GO" id="GO:0006000">
    <property type="term" value="P:fructose metabolic process"/>
    <property type="evidence" value="ECO:0007669"/>
    <property type="project" value="TreeGrafter"/>
</dbReference>
<dbReference type="GO" id="GO:0006094">
    <property type="term" value="P:gluconeogenesis"/>
    <property type="evidence" value="ECO:0007669"/>
    <property type="project" value="UniProtKB-UniRule"/>
</dbReference>
<dbReference type="GO" id="GO:0005986">
    <property type="term" value="P:sucrose biosynthetic process"/>
    <property type="evidence" value="ECO:0007669"/>
    <property type="project" value="TreeGrafter"/>
</dbReference>
<dbReference type="CDD" id="cd00354">
    <property type="entry name" value="FBPase"/>
    <property type="match status" value="1"/>
</dbReference>
<dbReference type="FunFam" id="3.30.540.10:FF:000002">
    <property type="entry name" value="Fructose-1,6-bisphosphatase class 1"/>
    <property type="match status" value="1"/>
</dbReference>
<dbReference type="FunFam" id="3.40.190.80:FF:000001">
    <property type="entry name" value="Fructose-1,6-bisphosphatase class 1"/>
    <property type="match status" value="1"/>
</dbReference>
<dbReference type="Gene3D" id="3.40.190.80">
    <property type="match status" value="1"/>
</dbReference>
<dbReference type="Gene3D" id="3.30.540.10">
    <property type="entry name" value="Fructose-1,6-Bisphosphatase, subunit A, domain 1"/>
    <property type="match status" value="1"/>
</dbReference>
<dbReference type="HAMAP" id="MF_01855">
    <property type="entry name" value="FBPase_class1"/>
    <property type="match status" value="1"/>
</dbReference>
<dbReference type="InterPro" id="IPR044015">
    <property type="entry name" value="FBPase_C_dom"/>
</dbReference>
<dbReference type="InterPro" id="IPR000146">
    <property type="entry name" value="FBPase_class-1"/>
</dbReference>
<dbReference type="InterPro" id="IPR033391">
    <property type="entry name" value="FBPase_N"/>
</dbReference>
<dbReference type="InterPro" id="IPR028343">
    <property type="entry name" value="FBPtase"/>
</dbReference>
<dbReference type="InterPro" id="IPR020548">
    <property type="entry name" value="Fructose_bisphosphatase_AS"/>
</dbReference>
<dbReference type="NCBIfam" id="NF006778">
    <property type="entry name" value="PRK09293.1-1"/>
    <property type="match status" value="1"/>
</dbReference>
<dbReference type="NCBIfam" id="NF006779">
    <property type="entry name" value="PRK09293.1-3"/>
    <property type="match status" value="1"/>
</dbReference>
<dbReference type="PANTHER" id="PTHR11556">
    <property type="entry name" value="FRUCTOSE-1,6-BISPHOSPHATASE-RELATED"/>
    <property type="match status" value="1"/>
</dbReference>
<dbReference type="PANTHER" id="PTHR11556:SF35">
    <property type="entry name" value="SEDOHEPTULOSE-1,7-BISPHOSPHATASE, CHLOROPLASTIC"/>
    <property type="match status" value="1"/>
</dbReference>
<dbReference type="Pfam" id="PF00316">
    <property type="entry name" value="FBPase"/>
    <property type="match status" value="1"/>
</dbReference>
<dbReference type="Pfam" id="PF18913">
    <property type="entry name" value="FBPase_C"/>
    <property type="match status" value="1"/>
</dbReference>
<dbReference type="PIRSF" id="PIRSF500210">
    <property type="entry name" value="FBPtase"/>
    <property type="match status" value="1"/>
</dbReference>
<dbReference type="PIRSF" id="PIRSF000904">
    <property type="entry name" value="FBPtase_SBPase"/>
    <property type="match status" value="1"/>
</dbReference>
<dbReference type="PRINTS" id="PR00115">
    <property type="entry name" value="F16BPHPHTASE"/>
</dbReference>
<dbReference type="SUPFAM" id="SSF56655">
    <property type="entry name" value="Carbohydrate phosphatase"/>
    <property type="match status" value="1"/>
</dbReference>
<dbReference type="PROSITE" id="PS00124">
    <property type="entry name" value="FBPASE"/>
    <property type="match status" value="1"/>
</dbReference>
<sequence length="332" mass="36834">MKTLGEFIVEKQHEFSHATGELTALLSAIKLGAKIIHRDINKAGLVDILGASGAENVQGEVQQKLDLFANEKLKAALKARDIVAGIASEEEDEIVVFEGCEHAKYVVLMDPLDGSSNIDVNVSVGTIFSIYRRVTPVGTPVTEEDFLQPGNKQVAAGYVVYGSSTMLVYTTGCGVHAFTYDPSLGVFCLCQERMRFPEKGKTYSINEGNYIKFPNGVKKYIKFCQEEDKSTNRPYTSRYIGSLVADFHRNLLKGGIYLYPSTASHPDGKLRLLYECNPMAFLAEQAGGKASDGKERILDIIPETLHQRRSFFVGNDHMVEDVERFIREFPDA</sequence>
<name>F16PA_ECOSM</name>
<reference key="1">
    <citation type="journal article" date="2008" name="J. Bacteriol.">
        <title>Insights into the environmental resistance gene pool from the genome sequence of the multidrug-resistant environmental isolate Escherichia coli SMS-3-5.</title>
        <authorList>
            <person name="Fricke W.F."/>
            <person name="Wright M.S."/>
            <person name="Lindell A.H."/>
            <person name="Harkins D.M."/>
            <person name="Baker-Austin C."/>
            <person name="Ravel J."/>
            <person name="Stepanauskas R."/>
        </authorList>
    </citation>
    <scope>NUCLEOTIDE SEQUENCE [LARGE SCALE GENOMIC DNA]</scope>
    <source>
        <strain>SMS-3-5 / SECEC</strain>
    </source>
</reference>
<organism>
    <name type="scientific">Escherichia coli (strain SMS-3-5 / SECEC)</name>
    <dbReference type="NCBI Taxonomy" id="439855"/>
    <lineage>
        <taxon>Bacteria</taxon>
        <taxon>Pseudomonadati</taxon>
        <taxon>Pseudomonadota</taxon>
        <taxon>Gammaproteobacteria</taxon>
        <taxon>Enterobacterales</taxon>
        <taxon>Enterobacteriaceae</taxon>
        <taxon>Escherichia</taxon>
    </lineage>
</organism>
<protein>
    <recommendedName>
        <fullName evidence="1">Fructose-1,6-bisphosphatase class 1</fullName>
        <shortName evidence="1">FBPase class 1</shortName>
        <ecNumber evidence="1">3.1.3.11</ecNumber>
    </recommendedName>
    <alternativeName>
        <fullName evidence="1">D-fructose-1,6-bisphosphate 1-phosphohydrolase class 1</fullName>
    </alternativeName>
</protein>
<proteinExistence type="inferred from homology"/>
<accession>B1LRB5</accession>
<keyword id="KW-0119">Carbohydrate metabolism</keyword>
<keyword id="KW-0963">Cytoplasm</keyword>
<keyword id="KW-0378">Hydrolase</keyword>
<keyword id="KW-0460">Magnesium</keyword>
<keyword id="KW-0479">Metal-binding</keyword>